<dbReference type="EMBL" id="U00096">
    <property type="protein sequence ID" value="AAC74798.4"/>
    <property type="molecule type" value="Genomic_DNA"/>
</dbReference>
<dbReference type="EMBL" id="AP009048">
    <property type="protein sequence ID" value="BAE76511.1"/>
    <property type="molecule type" value="Genomic_DNA"/>
</dbReference>
<dbReference type="PIR" id="H64931">
    <property type="entry name" value="H64931"/>
</dbReference>
<dbReference type="RefSeq" id="NP_416242.6">
    <property type="nucleotide sequence ID" value="NC_000913.3"/>
</dbReference>
<dbReference type="RefSeq" id="WP_001297653.1">
    <property type="nucleotide sequence ID" value="NZ_STEB01000009.1"/>
</dbReference>
<dbReference type="BioGRID" id="4261487">
    <property type="interactions" value="66"/>
</dbReference>
<dbReference type="FunCoup" id="P64481">
    <property type="interactions" value="71"/>
</dbReference>
<dbReference type="STRING" id="511145.b1728"/>
<dbReference type="PaxDb" id="511145-b1728"/>
<dbReference type="EnsemblBacteria" id="AAC74798">
    <property type="protein sequence ID" value="AAC74798"/>
    <property type="gene ID" value="b1728"/>
</dbReference>
<dbReference type="GeneID" id="945644"/>
<dbReference type="KEGG" id="ecj:JW5281"/>
<dbReference type="KEGG" id="eco:b1728"/>
<dbReference type="KEGG" id="ecoc:C3026_09880"/>
<dbReference type="PATRIC" id="fig|1411691.4.peg.528"/>
<dbReference type="EchoBASE" id="EB3745"/>
<dbReference type="eggNOG" id="COG1988">
    <property type="taxonomic scope" value="Bacteria"/>
</dbReference>
<dbReference type="HOGENOM" id="CLU_097802_2_1_6"/>
<dbReference type="InParanoid" id="P64481"/>
<dbReference type="OMA" id="TGDWWHI"/>
<dbReference type="OrthoDB" id="5459053at2"/>
<dbReference type="PhylomeDB" id="P64481"/>
<dbReference type="BioCyc" id="EcoCyc:G6933-MONOMER"/>
<dbReference type="PRO" id="PR:P64481"/>
<dbReference type="Proteomes" id="UP000000625">
    <property type="component" value="Chromosome"/>
</dbReference>
<dbReference type="GO" id="GO:0005886">
    <property type="term" value="C:plasma membrane"/>
    <property type="evidence" value="ECO:0000314"/>
    <property type="project" value="EcoCyc"/>
</dbReference>
<dbReference type="GO" id="GO:0006974">
    <property type="term" value="P:DNA damage response"/>
    <property type="evidence" value="ECO:0000270"/>
    <property type="project" value="EcoliWiki"/>
</dbReference>
<dbReference type="InterPro" id="IPR016956">
    <property type="entry name" value="YdjM"/>
</dbReference>
<dbReference type="InterPro" id="IPR007404">
    <property type="entry name" value="YdjM-like"/>
</dbReference>
<dbReference type="NCBIfam" id="NF008651">
    <property type="entry name" value="PRK11648.1"/>
    <property type="match status" value="1"/>
</dbReference>
<dbReference type="PANTHER" id="PTHR35531">
    <property type="entry name" value="INNER MEMBRANE PROTEIN YBCI-RELATED"/>
    <property type="match status" value="1"/>
</dbReference>
<dbReference type="PANTHER" id="PTHR35531:SF1">
    <property type="entry name" value="INNER MEMBRANE PROTEIN YBCI-RELATED"/>
    <property type="match status" value="1"/>
</dbReference>
<dbReference type="Pfam" id="PF04307">
    <property type="entry name" value="YdjM"/>
    <property type="match status" value="1"/>
</dbReference>
<dbReference type="PIRSF" id="PIRSF030780">
    <property type="entry name" value="Md_memb_hyd_prd"/>
    <property type="match status" value="1"/>
</dbReference>
<accession>P64481</accession>
<accession>P76209</accession>
<accession>Q2MB45</accession>
<comment type="subcellular location">
    <subcellularLocation>
        <location evidence="3">Cell inner membrane</location>
        <topology evidence="5">Multi-pass membrane protein</topology>
    </subcellularLocation>
</comment>
<comment type="induction">
    <text evidence="2">Repressed by LexA, induced by DNA damage; it has 2 LexA binding sites both of which bind LexA with high affinity in a cooperative manner.</text>
</comment>
<comment type="similarity">
    <text evidence="4">To B.subtilis YvsG.</text>
</comment>
<reference key="1">
    <citation type="journal article" date="1997" name="Science">
        <title>The complete genome sequence of Escherichia coli K-12.</title>
        <authorList>
            <person name="Blattner F.R."/>
            <person name="Plunkett G. III"/>
            <person name="Bloch C.A."/>
            <person name="Perna N.T."/>
            <person name="Burland V."/>
            <person name="Riley M."/>
            <person name="Collado-Vides J."/>
            <person name="Glasner J.D."/>
            <person name="Rode C.K."/>
            <person name="Mayhew G.F."/>
            <person name="Gregor J."/>
            <person name="Davis N.W."/>
            <person name="Kirkpatrick H.A."/>
            <person name="Goeden M.A."/>
            <person name="Rose D.J."/>
            <person name="Mau B."/>
            <person name="Shao Y."/>
        </authorList>
    </citation>
    <scope>NUCLEOTIDE SEQUENCE [LARGE SCALE GENOMIC DNA]</scope>
    <source>
        <strain>K12 / MG1655 / ATCC 47076</strain>
    </source>
</reference>
<reference key="2">
    <citation type="journal article" date="2006" name="Mol. Syst. Biol.">
        <title>Highly accurate genome sequences of Escherichia coli K-12 strains MG1655 and W3110.</title>
        <authorList>
            <person name="Hayashi K."/>
            <person name="Morooka N."/>
            <person name="Yamamoto Y."/>
            <person name="Fujita K."/>
            <person name="Isono K."/>
            <person name="Choi S."/>
            <person name="Ohtsubo E."/>
            <person name="Baba T."/>
            <person name="Wanner B.L."/>
            <person name="Mori H."/>
            <person name="Horiuchi T."/>
        </authorList>
    </citation>
    <scope>NUCLEOTIDE SEQUENCE [LARGE SCALE GENOMIC DNA]</scope>
    <source>
        <strain>K12 / W3110 / ATCC 27325 / DSM 5911</strain>
    </source>
</reference>
<reference key="3">
    <citation type="journal article" date="2000" name="Mol. Microbiol.">
        <title>Identification of additional genes belonging to the LexA regulon in Escherichia coli.</title>
        <authorList>
            <person name="Fernandez De Henestrosa A.R."/>
            <person name="Ogi T."/>
            <person name="Aoyagi S."/>
            <person name="Chafin D."/>
            <person name="Hayes J.J."/>
            <person name="Ohmori H."/>
            <person name="Woodgate R."/>
        </authorList>
    </citation>
    <scope>REGULATION BY LEXA</scope>
    <scope>INDUCTION</scope>
    <source>
        <strain>K12 / RW118</strain>
    </source>
</reference>
<reference key="4">
    <citation type="journal article" date="2005" name="Science">
        <title>Global topology analysis of the Escherichia coli inner membrane proteome.</title>
        <authorList>
            <person name="Daley D.O."/>
            <person name="Rapp M."/>
            <person name="Granseth E."/>
            <person name="Melen K."/>
            <person name="Drew D."/>
            <person name="von Heijne G."/>
        </authorList>
    </citation>
    <scope>TOPOLOGY [LARGE SCALE ANALYSIS]</scope>
    <source>
        <strain>K12 / MG1655 / ATCC 47076</strain>
    </source>
</reference>
<proteinExistence type="evidence at protein level"/>
<keyword id="KW-0997">Cell inner membrane</keyword>
<keyword id="KW-1003">Cell membrane</keyword>
<keyword id="KW-0472">Membrane</keyword>
<keyword id="KW-1185">Reference proteome</keyword>
<keyword id="KW-0812">Transmembrane</keyword>
<keyword id="KW-1133">Transmembrane helix</keyword>
<protein>
    <recommendedName>
        <fullName>Inner membrane protein YdjM</fullName>
    </recommendedName>
</protein>
<gene>
    <name type="primary">ydjM</name>
    <name type="ordered locus">b1728</name>
    <name type="ordered locus">JW5281</name>
</gene>
<name>YDJM_ECOLI</name>
<evidence type="ECO:0000255" key="1"/>
<evidence type="ECO:0000269" key="2">
    <source>
    </source>
</evidence>
<evidence type="ECO:0000269" key="3">
    <source>
    </source>
</evidence>
<evidence type="ECO:0000305" key="4"/>
<evidence type="ECO:0000305" key="5">
    <source>
    </source>
</evidence>
<sequence length="196" mass="22350">MTAEGHLLFSIACAVFAKNAELTPVLAQGDWWHIVPSAILTCLLPDIDHPKSFLGQRLKWISKPIARAFGHRGFTHSLLAVFALLATFYLKVPEGWFIPADALQGMVLGYLSHILADMLTPAGVPLLWPCRWRFRLPILVPQKGNQLERFICMALFVWSVWMPHSLPENSAVRWSSQMINTLQIQFHRLIKHQVEY</sequence>
<feature type="chain" id="PRO_0000013857" description="Inner membrane protein YdjM">
    <location>
        <begin position="1"/>
        <end position="196"/>
    </location>
</feature>
<feature type="topological domain" description="Periplasmic" evidence="1">
    <location>
        <begin position="1"/>
        <end position="23"/>
    </location>
</feature>
<feature type="transmembrane region" description="Helical" evidence="1">
    <location>
        <begin position="24"/>
        <end position="44"/>
    </location>
</feature>
<feature type="topological domain" description="Cytoplasmic" evidence="1">
    <location>
        <begin position="45"/>
        <end position="77"/>
    </location>
</feature>
<feature type="transmembrane region" description="Helical" evidence="1">
    <location>
        <begin position="78"/>
        <end position="98"/>
    </location>
</feature>
<feature type="topological domain" description="Periplasmic" evidence="1">
    <location>
        <begin position="99"/>
        <end position="106"/>
    </location>
</feature>
<feature type="transmembrane region" description="Helical" evidence="1">
    <location>
        <begin position="107"/>
        <end position="127"/>
    </location>
</feature>
<feature type="topological domain" description="Cytoplasmic" evidence="1">
    <location>
        <begin position="128"/>
        <end position="149"/>
    </location>
</feature>
<feature type="transmembrane region" description="Helical" evidence="1">
    <location>
        <begin position="150"/>
        <end position="170"/>
    </location>
</feature>
<feature type="topological domain" description="Periplasmic" evidence="3">
    <location>
        <begin position="171"/>
        <end position="196"/>
    </location>
</feature>
<organism>
    <name type="scientific">Escherichia coli (strain K12)</name>
    <dbReference type="NCBI Taxonomy" id="83333"/>
    <lineage>
        <taxon>Bacteria</taxon>
        <taxon>Pseudomonadati</taxon>
        <taxon>Pseudomonadota</taxon>
        <taxon>Gammaproteobacteria</taxon>
        <taxon>Enterobacterales</taxon>
        <taxon>Enterobacteriaceae</taxon>
        <taxon>Escherichia</taxon>
    </lineage>
</organism>